<feature type="chain" id="PRO_0000192401" description="Shikimate kinase">
    <location>
        <begin position="1"/>
        <end position="172"/>
    </location>
</feature>
<feature type="binding site" evidence="1">
    <location>
        <begin position="11"/>
        <end position="16"/>
    </location>
    <ligand>
        <name>ATP</name>
        <dbReference type="ChEBI" id="CHEBI:30616"/>
    </ligand>
</feature>
<feature type="binding site" evidence="1">
    <location>
        <position position="15"/>
    </location>
    <ligand>
        <name>Mg(2+)</name>
        <dbReference type="ChEBI" id="CHEBI:18420"/>
    </ligand>
</feature>
<feature type="binding site" evidence="1">
    <location>
        <position position="33"/>
    </location>
    <ligand>
        <name>substrate</name>
    </ligand>
</feature>
<feature type="binding site" evidence="1">
    <location>
        <position position="57"/>
    </location>
    <ligand>
        <name>substrate</name>
    </ligand>
</feature>
<feature type="binding site" evidence="1">
    <location>
        <position position="79"/>
    </location>
    <ligand>
        <name>substrate</name>
    </ligand>
</feature>
<feature type="binding site" evidence="1">
    <location>
        <position position="117"/>
    </location>
    <ligand>
        <name>ATP</name>
        <dbReference type="ChEBI" id="CHEBI:30616"/>
    </ligand>
</feature>
<feature type="binding site" evidence="1">
    <location>
        <position position="136"/>
    </location>
    <ligand>
        <name>substrate</name>
    </ligand>
</feature>
<feature type="binding site" evidence="1">
    <location>
        <position position="153"/>
    </location>
    <ligand>
        <name>ATP</name>
        <dbReference type="ChEBI" id="CHEBI:30616"/>
    </ligand>
</feature>
<accession>Q88CV1</accession>
<gene>
    <name evidence="1" type="primary">aroK</name>
    <name type="ordered locus">PP_5079</name>
</gene>
<name>AROK_PSEPK</name>
<evidence type="ECO:0000255" key="1">
    <source>
        <dbReference type="HAMAP-Rule" id="MF_00109"/>
    </source>
</evidence>
<proteinExistence type="inferred from homology"/>
<reference key="1">
    <citation type="journal article" date="2002" name="Environ. Microbiol.">
        <title>Complete genome sequence and comparative analysis of the metabolically versatile Pseudomonas putida KT2440.</title>
        <authorList>
            <person name="Nelson K.E."/>
            <person name="Weinel C."/>
            <person name="Paulsen I.T."/>
            <person name="Dodson R.J."/>
            <person name="Hilbert H."/>
            <person name="Martins dos Santos V.A.P."/>
            <person name="Fouts D.E."/>
            <person name="Gill S.R."/>
            <person name="Pop M."/>
            <person name="Holmes M."/>
            <person name="Brinkac L.M."/>
            <person name="Beanan M.J."/>
            <person name="DeBoy R.T."/>
            <person name="Daugherty S.C."/>
            <person name="Kolonay J.F."/>
            <person name="Madupu R."/>
            <person name="Nelson W.C."/>
            <person name="White O."/>
            <person name="Peterson J.D."/>
            <person name="Khouri H.M."/>
            <person name="Hance I."/>
            <person name="Chris Lee P."/>
            <person name="Holtzapple E.K."/>
            <person name="Scanlan D."/>
            <person name="Tran K."/>
            <person name="Moazzez A."/>
            <person name="Utterback T.R."/>
            <person name="Rizzo M."/>
            <person name="Lee K."/>
            <person name="Kosack D."/>
            <person name="Moestl D."/>
            <person name="Wedler H."/>
            <person name="Lauber J."/>
            <person name="Stjepandic D."/>
            <person name="Hoheisel J."/>
            <person name="Straetz M."/>
            <person name="Heim S."/>
            <person name="Kiewitz C."/>
            <person name="Eisen J.A."/>
            <person name="Timmis K.N."/>
            <person name="Duesterhoeft A."/>
            <person name="Tuemmler B."/>
            <person name="Fraser C.M."/>
        </authorList>
    </citation>
    <scope>NUCLEOTIDE SEQUENCE [LARGE SCALE GENOMIC DNA]</scope>
    <source>
        <strain>ATCC 47054 / DSM 6125 / CFBP 8728 / NCIMB 11950 / KT2440</strain>
    </source>
</reference>
<dbReference type="EC" id="2.7.1.71" evidence="1"/>
<dbReference type="EMBL" id="AE015451">
    <property type="protein sequence ID" value="AAN70644.1"/>
    <property type="molecule type" value="Genomic_DNA"/>
</dbReference>
<dbReference type="RefSeq" id="NP_747180.1">
    <property type="nucleotide sequence ID" value="NC_002947.4"/>
</dbReference>
<dbReference type="RefSeq" id="WP_010955625.1">
    <property type="nucleotide sequence ID" value="NZ_CP169744.1"/>
</dbReference>
<dbReference type="SMR" id="Q88CV1"/>
<dbReference type="STRING" id="160488.PP_5079"/>
<dbReference type="PaxDb" id="160488-PP_5079"/>
<dbReference type="GeneID" id="83682813"/>
<dbReference type="KEGG" id="ppu:PP_5079"/>
<dbReference type="PATRIC" id="fig|160488.4.peg.5421"/>
<dbReference type="eggNOG" id="COG0703">
    <property type="taxonomic scope" value="Bacteria"/>
</dbReference>
<dbReference type="HOGENOM" id="CLU_057607_2_2_6"/>
<dbReference type="OrthoDB" id="9800332at2"/>
<dbReference type="PhylomeDB" id="Q88CV1"/>
<dbReference type="BioCyc" id="PPUT160488:G1G01-5423-MONOMER"/>
<dbReference type="UniPathway" id="UPA00053">
    <property type="reaction ID" value="UER00088"/>
</dbReference>
<dbReference type="Proteomes" id="UP000000556">
    <property type="component" value="Chromosome"/>
</dbReference>
<dbReference type="GO" id="GO:0005829">
    <property type="term" value="C:cytosol"/>
    <property type="evidence" value="ECO:0007669"/>
    <property type="project" value="TreeGrafter"/>
</dbReference>
<dbReference type="GO" id="GO:0005524">
    <property type="term" value="F:ATP binding"/>
    <property type="evidence" value="ECO:0007669"/>
    <property type="project" value="UniProtKB-UniRule"/>
</dbReference>
<dbReference type="GO" id="GO:0000287">
    <property type="term" value="F:magnesium ion binding"/>
    <property type="evidence" value="ECO:0007669"/>
    <property type="project" value="UniProtKB-UniRule"/>
</dbReference>
<dbReference type="GO" id="GO:0004765">
    <property type="term" value="F:shikimate kinase activity"/>
    <property type="evidence" value="ECO:0007669"/>
    <property type="project" value="UniProtKB-UniRule"/>
</dbReference>
<dbReference type="GO" id="GO:0008652">
    <property type="term" value="P:amino acid biosynthetic process"/>
    <property type="evidence" value="ECO:0007669"/>
    <property type="project" value="UniProtKB-KW"/>
</dbReference>
<dbReference type="GO" id="GO:0009073">
    <property type="term" value="P:aromatic amino acid family biosynthetic process"/>
    <property type="evidence" value="ECO:0007669"/>
    <property type="project" value="UniProtKB-KW"/>
</dbReference>
<dbReference type="GO" id="GO:0009423">
    <property type="term" value="P:chorismate biosynthetic process"/>
    <property type="evidence" value="ECO:0007669"/>
    <property type="project" value="UniProtKB-UniRule"/>
</dbReference>
<dbReference type="CDD" id="cd00464">
    <property type="entry name" value="SK"/>
    <property type="match status" value="1"/>
</dbReference>
<dbReference type="Gene3D" id="3.40.50.300">
    <property type="entry name" value="P-loop containing nucleotide triphosphate hydrolases"/>
    <property type="match status" value="1"/>
</dbReference>
<dbReference type="HAMAP" id="MF_00109">
    <property type="entry name" value="Shikimate_kinase"/>
    <property type="match status" value="1"/>
</dbReference>
<dbReference type="InterPro" id="IPR027417">
    <property type="entry name" value="P-loop_NTPase"/>
</dbReference>
<dbReference type="InterPro" id="IPR031322">
    <property type="entry name" value="Shikimate/glucono_kinase"/>
</dbReference>
<dbReference type="InterPro" id="IPR000623">
    <property type="entry name" value="Shikimate_kinase/TSH1"/>
</dbReference>
<dbReference type="InterPro" id="IPR023000">
    <property type="entry name" value="Shikimate_kinase_CS"/>
</dbReference>
<dbReference type="NCBIfam" id="NF003456">
    <property type="entry name" value="PRK05057.1"/>
    <property type="match status" value="1"/>
</dbReference>
<dbReference type="PANTHER" id="PTHR21087">
    <property type="entry name" value="SHIKIMATE KINASE"/>
    <property type="match status" value="1"/>
</dbReference>
<dbReference type="PANTHER" id="PTHR21087:SF16">
    <property type="entry name" value="SHIKIMATE KINASE 1, CHLOROPLASTIC"/>
    <property type="match status" value="1"/>
</dbReference>
<dbReference type="Pfam" id="PF01202">
    <property type="entry name" value="SKI"/>
    <property type="match status" value="1"/>
</dbReference>
<dbReference type="PRINTS" id="PR01100">
    <property type="entry name" value="SHIKIMTKNASE"/>
</dbReference>
<dbReference type="SUPFAM" id="SSF52540">
    <property type="entry name" value="P-loop containing nucleoside triphosphate hydrolases"/>
    <property type="match status" value="1"/>
</dbReference>
<dbReference type="PROSITE" id="PS01128">
    <property type="entry name" value="SHIKIMATE_KINASE"/>
    <property type="match status" value="1"/>
</dbReference>
<protein>
    <recommendedName>
        <fullName evidence="1">Shikimate kinase</fullName>
        <shortName evidence="1">SK</shortName>
        <ecNumber evidence="1">2.7.1.71</ecNumber>
    </recommendedName>
</protein>
<sequence>MRNLILVGPMGAGKSTIGRLLAKELRLLFKDSDKEIELRCGANIPWIFDKEGEPGFRDREQAMIAELCALDGVVLATGGGAVMREANRQALHQGGRVIYLHASVEQQVGRTARDRNRPLLRTANPEATLRTLLETRDPLYREIADLVVETDERPPRMVVIDILERLQQLPPR</sequence>
<organism>
    <name type="scientific">Pseudomonas putida (strain ATCC 47054 / DSM 6125 / CFBP 8728 / NCIMB 11950 / KT2440)</name>
    <dbReference type="NCBI Taxonomy" id="160488"/>
    <lineage>
        <taxon>Bacteria</taxon>
        <taxon>Pseudomonadati</taxon>
        <taxon>Pseudomonadota</taxon>
        <taxon>Gammaproteobacteria</taxon>
        <taxon>Pseudomonadales</taxon>
        <taxon>Pseudomonadaceae</taxon>
        <taxon>Pseudomonas</taxon>
    </lineage>
</organism>
<comment type="function">
    <text evidence="1">Catalyzes the specific phosphorylation of the 3-hydroxyl group of shikimic acid using ATP as a cosubstrate.</text>
</comment>
<comment type="catalytic activity">
    <reaction evidence="1">
        <text>shikimate + ATP = 3-phosphoshikimate + ADP + H(+)</text>
        <dbReference type="Rhea" id="RHEA:13121"/>
        <dbReference type="ChEBI" id="CHEBI:15378"/>
        <dbReference type="ChEBI" id="CHEBI:30616"/>
        <dbReference type="ChEBI" id="CHEBI:36208"/>
        <dbReference type="ChEBI" id="CHEBI:145989"/>
        <dbReference type="ChEBI" id="CHEBI:456216"/>
        <dbReference type="EC" id="2.7.1.71"/>
    </reaction>
</comment>
<comment type="cofactor">
    <cofactor evidence="1">
        <name>Mg(2+)</name>
        <dbReference type="ChEBI" id="CHEBI:18420"/>
    </cofactor>
    <text evidence="1">Binds 1 Mg(2+) ion per subunit.</text>
</comment>
<comment type="pathway">
    <text evidence="1">Metabolic intermediate biosynthesis; chorismate biosynthesis; chorismate from D-erythrose 4-phosphate and phosphoenolpyruvate: step 5/7.</text>
</comment>
<comment type="subunit">
    <text evidence="1">Monomer.</text>
</comment>
<comment type="subcellular location">
    <subcellularLocation>
        <location evidence="1">Cytoplasm</location>
    </subcellularLocation>
</comment>
<comment type="similarity">
    <text evidence="1">Belongs to the shikimate kinase family.</text>
</comment>
<keyword id="KW-0028">Amino-acid biosynthesis</keyword>
<keyword id="KW-0057">Aromatic amino acid biosynthesis</keyword>
<keyword id="KW-0067">ATP-binding</keyword>
<keyword id="KW-0963">Cytoplasm</keyword>
<keyword id="KW-0418">Kinase</keyword>
<keyword id="KW-0460">Magnesium</keyword>
<keyword id="KW-0479">Metal-binding</keyword>
<keyword id="KW-0547">Nucleotide-binding</keyword>
<keyword id="KW-1185">Reference proteome</keyword>
<keyword id="KW-0808">Transferase</keyword>